<accession>B9JX64</accession>
<dbReference type="EC" id="4.1.1.48" evidence="1"/>
<dbReference type="EMBL" id="CP000633">
    <property type="protein sequence ID" value="ACM36842.1"/>
    <property type="molecule type" value="Genomic_DNA"/>
</dbReference>
<dbReference type="RefSeq" id="WP_015916263.1">
    <property type="nucleotide sequence ID" value="NC_011989.1"/>
</dbReference>
<dbReference type="SMR" id="B9JX64"/>
<dbReference type="STRING" id="311402.Avi_2567"/>
<dbReference type="KEGG" id="avi:Avi_2567"/>
<dbReference type="eggNOG" id="COG0134">
    <property type="taxonomic scope" value="Bacteria"/>
</dbReference>
<dbReference type="HOGENOM" id="CLU_034247_2_0_5"/>
<dbReference type="UniPathway" id="UPA00035">
    <property type="reaction ID" value="UER00043"/>
</dbReference>
<dbReference type="Proteomes" id="UP000001596">
    <property type="component" value="Chromosome 1"/>
</dbReference>
<dbReference type="GO" id="GO:0004425">
    <property type="term" value="F:indole-3-glycerol-phosphate synthase activity"/>
    <property type="evidence" value="ECO:0007669"/>
    <property type="project" value="UniProtKB-UniRule"/>
</dbReference>
<dbReference type="GO" id="GO:0004640">
    <property type="term" value="F:phosphoribosylanthranilate isomerase activity"/>
    <property type="evidence" value="ECO:0007669"/>
    <property type="project" value="TreeGrafter"/>
</dbReference>
<dbReference type="GO" id="GO:0000162">
    <property type="term" value="P:L-tryptophan biosynthetic process"/>
    <property type="evidence" value="ECO:0007669"/>
    <property type="project" value="UniProtKB-UniRule"/>
</dbReference>
<dbReference type="CDD" id="cd00331">
    <property type="entry name" value="IGPS"/>
    <property type="match status" value="1"/>
</dbReference>
<dbReference type="FunFam" id="3.20.20.70:FF:000024">
    <property type="entry name" value="Indole-3-glycerol phosphate synthase"/>
    <property type="match status" value="1"/>
</dbReference>
<dbReference type="Gene3D" id="3.20.20.70">
    <property type="entry name" value="Aldolase class I"/>
    <property type="match status" value="1"/>
</dbReference>
<dbReference type="HAMAP" id="MF_00134_B">
    <property type="entry name" value="IGPS_B"/>
    <property type="match status" value="1"/>
</dbReference>
<dbReference type="InterPro" id="IPR013785">
    <property type="entry name" value="Aldolase_TIM"/>
</dbReference>
<dbReference type="InterPro" id="IPR045186">
    <property type="entry name" value="Indole-3-glycerol_P_synth"/>
</dbReference>
<dbReference type="InterPro" id="IPR013798">
    <property type="entry name" value="Indole-3-glycerol_P_synth_dom"/>
</dbReference>
<dbReference type="InterPro" id="IPR001468">
    <property type="entry name" value="Indole-3-GlycerolPSynthase_CS"/>
</dbReference>
<dbReference type="InterPro" id="IPR011060">
    <property type="entry name" value="RibuloseP-bd_barrel"/>
</dbReference>
<dbReference type="NCBIfam" id="NF001370">
    <property type="entry name" value="PRK00278.1-2"/>
    <property type="match status" value="1"/>
</dbReference>
<dbReference type="NCBIfam" id="NF001373">
    <property type="entry name" value="PRK00278.1-6"/>
    <property type="match status" value="1"/>
</dbReference>
<dbReference type="NCBIfam" id="NF001377">
    <property type="entry name" value="PRK00278.2-4"/>
    <property type="match status" value="1"/>
</dbReference>
<dbReference type="PANTHER" id="PTHR22854:SF2">
    <property type="entry name" value="INDOLE-3-GLYCEROL-PHOSPHATE SYNTHASE"/>
    <property type="match status" value="1"/>
</dbReference>
<dbReference type="PANTHER" id="PTHR22854">
    <property type="entry name" value="TRYPTOPHAN BIOSYNTHESIS PROTEIN"/>
    <property type="match status" value="1"/>
</dbReference>
<dbReference type="Pfam" id="PF00218">
    <property type="entry name" value="IGPS"/>
    <property type="match status" value="1"/>
</dbReference>
<dbReference type="SUPFAM" id="SSF51366">
    <property type="entry name" value="Ribulose-phoshate binding barrel"/>
    <property type="match status" value="1"/>
</dbReference>
<dbReference type="PROSITE" id="PS00614">
    <property type="entry name" value="IGPS"/>
    <property type="match status" value="1"/>
</dbReference>
<keyword id="KW-0028">Amino-acid biosynthesis</keyword>
<keyword id="KW-0057">Aromatic amino acid biosynthesis</keyword>
<keyword id="KW-0210">Decarboxylase</keyword>
<keyword id="KW-0456">Lyase</keyword>
<keyword id="KW-1185">Reference proteome</keyword>
<keyword id="KW-0822">Tryptophan biosynthesis</keyword>
<sequence length="271" mass="29030">MSDILKKIEAYKREEIAAAKNAVPLDEIKARAADQPPARGFYKALRAKQAAGNFGLIAEIKKASPSKGLIRPDFDPPALASAYEAGGAACLSVLTDAPSFQGAPDFLVAARAACTLPALRKDFMFEAYQVHEARAWGADCILLIMASLSDSEATDLEGEALALGMDVLIEVHDEEEMLRALKLASPLVGINNRNLRTFEVDLAVSERLAAMVPADRLLVGESGIFTHEDCLRLQKSGIETFLVGESLMRKDDVTGATKALLTGASDRIAAE</sequence>
<name>TRPC_ALLAM</name>
<organism>
    <name type="scientific">Allorhizobium ampelinum (strain ATCC BAA-846 / DSM 112012 / S4)</name>
    <name type="common">Agrobacterium vitis (strain S4)</name>
    <dbReference type="NCBI Taxonomy" id="311402"/>
    <lineage>
        <taxon>Bacteria</taxon>
        <taxon>Pseudomonadati</taxon>
        <taxon>Pseudomonadota</taxon>
        <taxon>Alphaproteobacteria</taxon>
        <taxon>Hyphomicrobiales</taxon>
        <taxon>Rhizobiaceae</taxon>
        <taxon>Rhizobium/Agrobacterium group</taxon>
        <taxon>Allorhizobium</taxon>
        <taxon>Allorhizobium ampelinum</taxon>
    </lineage>
</organism>
<feature type="chain" id="PRO_1000198763" description="Indole-3-glycerol phosphate synthase">
    <location>
        <begin position="1"/>
        <end position="271"/>
    </location>
</feature>
<proteinExistence type="inferred from homology"/>
<gene>
    <name evidence="1" type="primary">trpC</name>
    <name type="ordered locus">Avi_2567</name>
</gene>
<protein>
    <recommendedName>
        <fullName evidence="1">Indole-3-glycerol phosphate synthase</fullName>
        <shortName evidence="1">IGPS</shortName>
        <ecNumber evidence="1">4.1.1.48</ecNumber>
    </recommendedName>
</protein>
<comment type="catalytic activity">
    <reaction evidence="1">
        <text>1-(2-carboxyphenylamino)-1-deoxy-D-ribulose 5-phosphate + H(+) = (1S,2R)-1-C-(indol-3-yl)glycerol 3-phosphate + CO2 + H2O</text>
        <dbReference type="Rhea" id="RHEA:23476"/>
        <dbReference type="ChEBI" id="CHEBI:15377"/>
        <dbReference type="ChEBI" id="CHEBI:15378"/>
        <dbReference type="ChEBI" id="CHEBI:16526"/>
        <dbReference type="ChEBI" id="CHEBI:58613"/>
        <dbReference type="ChEBI" id="CHEBI:58866"/>
        <dbReference type="EC" id="4.1.1.48"/>
    </reaction>
</comment>
<comment type="pathway">
    <text evidence="1">Amino-acid biosynthesis; L-tryptophan biosynthesis; L-tryptophan from chorismate: step 4/5.</text>
</comment>
<comment type="similarity">
    <text evidence="1">Belongs to the TrpC family.</text>
</comment>
<evidence type="ECO:0000255" key="1">
    <source>
        <dbReference type="HAMAP-Rule" id="MF_00134"/>
    </source>
</evidence>
<reference key="1">
    <citation type="journal article" date="2009" name="J. Bacteriol.">
        <title>Genome sequences of three Agrobacterium biovars help elucidate the evolution of multichromosome genomes in bacteria.</title>
        <authorList>
            <person name="Slater S.C."/>
            <person name="Goldman B.S."/>
            <person name="Goodner B."/>
            <person name="Setubal J.C."/>
            <person name="Farrand S.K."/>
            <person name="Nester E.W."/>
            <person name="Burr T.J."/>
            <person name="Banta L."/>
            <person name="Dickerman A.W."/>
            <person name="Paulsen I."/>
            <person name="Otten L."/>
            <person name="Suen G."/>
            <person name="Welch R."/>
            <person name="Almeida N.F."/>
            <person name="Arnold F."/>
            <person name="Burton O.T."/>
            <person name="Du Z."/>
            <person name="Ewing A."/>
            <person name="Godsy E."/>
            <person name="Heisel S."/>
            <person name="Houmiel K.L."/>
            <person name="Jhaveri J."/>
            <person name="Lu J."/>
            <person name="Miller N.M."/>
            <person name="Norton S."/>
            <person name="Chen Q."/>
            <person name="Phoolcharoen W."/>
            <person name="Ohlin V."/>
            <person name="Ondrusek D."/>
            <person name="Pride N."/>
            <person name="Stricklin S.L."/>
            <person name="Sun J."/>
            <person name="Wheeler C."/>
            <person name="Wilson L."/>
            <person name="Zhu H."/>
            <person name="Wood D.W."/>
        </authorList>
    </citation>
    <scope>NUCLEOTIDE SEQUENCE [LARGE SCALE GENOMIC DNA]</scope>
    <source>
        <strain>ATCC BAA-846 / DSM 112012 / S4</strain>
    </source>
</reference>